<dbReference type="EMBL" id="AF108696">
    <property type="protein sequence ID" value="AAD45478.1"/>
    <property type="molecule type" value="Genomic_DNA"/>
</dbReference>
<dbReference type="GO" id="GO:0005743">
    <property type="term" value="C:mitochondrial inner membrane"/>
    <property type="evidence" value="ECO:0007669"/>
    <property type="project" value="UniProtKB-SubCell"/>
</dbReference>
<dbReference type="GO" id="GO:0045275">
    <property type="term" value="C:respiratory chain complex III"/>
    <property type="evidence" value="ECO:0007669"/>
    <property type="project" value="InterPro"/>
</dbReference>
<dbReference type="GO" id="GO:0046872">
    <property type="term" value="F:metal ion binding"/>
    <property type="evidence" value="ECO:0007669"/>
    <property type="project" value="UniProtKB-KW"/>
</dbReference>
<dbReference type="GO" id="GO:0008121">
    <property type="term" value="F:ubiquinol-cytochrome-c reductase activity"/>
    <property type="evidence" value="ECO:0007669"/>
    <property type="project" value="InterPro"/>
</dbReference>
<dbReference type="GO" id="GO:0006122">
    <property type="term" value="P:mitochondrial electron transport, ubiquinol to cytochrome c"/>
    <property type="evidence" value="ECO:0007669"/>
    <property type="project" value="TreeGrafter"/>
</dbReference>
<dbReference type="CDD" id="cd00290">
    <property type="entry name" value="cytochrome_b_C"/>
    <property type="match status" value="1"/>
</dbReference>
<dbReference type="CDD" id="cd00284">
    <property type="entry name" value="Cytochrome_b_N"/>
    <property type="match status" value="1"/>
</dbReference>
<dbReference type="FunFam" id="1.20.810.10:FF:000002">
    <property type="entry name" value="Cytochrome b"/>
    <property type="match status" value="1"/>
</dbReference>
<dbReference type="Gene3D" id="1.20.810.10">
    <property type="entry name" value="Cytochrome Bc1 Complex, Chain C"/>
    <property type="match status" value="1"/>
</dbReference>
<dbReference type="InterPro" id="IPR005798">
    <property type="entry name" value="Cyt_b/b6_C"/>
</dbReference>
<dbReference type="InterPro" id="IPR036150">
    <property type="entry name" value="Cyt_b/b6_C_sf"/>
</dbReference>
<dbReference type="InterPro" id="IPR005797">
    <property type="entry name" value="Cyt_b/b6_N"/>
</dbReference>
<dbReference type="InterPro" id="IPR027387">
    <property type="entry name" value="Cytb/b6-like_sf"/>
</dbReference>
<dbReference type="InterPro" id="IPR030689">
    <property type="entry name" value="Cytochrome_b"/>
</dbReference>
<dbReference type="InterPro" id="IPR048260">
    <property type="entry name" value="Cytochrome_b_C_euk/bac"/>
</dbReference>
<dbReference type="InterPro" id="IPR048259">
    <property type="entry name" value="Cytochrome_b_N_euk/bac"/>
</dbReference>
<dbReference type="InterPro" id="IPR016174">
    <property type="entry name" value="Di-haem_cyt_TM"/>
</dbReference>
<dbReference type="PANTHER" id="PTHR19271">
    <property type="entry name" value="CYTOCHROME B"/>
    <property type="match status" value="1"/>
</dbReference>
<dbReference type="PANTHER" id="PTHR19271:SF16">
    <property type="entry name" value="CYTOCHROME B"/>
    <property type="match status" value="1"/>
</dbReference>
<dbReference type="Pfam" id="PF00032">
    <property type="entry name" value="Cytochrom_B_C"/>
    <property type="match status" value="1"/>
</dbReference>
<dbReference type="Pfam" id="PF00033">
    <property type="entry name" value="Cytochrome_B"/>
    <property type="match status" value="1"/>
</dbReference>
<dbReference type="PIRSF" id="PIRSF038885">
    <property type="entry name" value="COB"/>
    <property type="match status" value="1"/>
</dbReference>
<dbReference type="SUPFAM" id="SSF81648">
    <property type="entry name" value="a domain/subunit of cytochrome bc1 complex (Ubiquinol-cytochrome c reductase)"/>
    <property type="match status" value="1"/>
</dbReference>
<dbReference type="SUPFAM" id="SSF81342">
    <property type="entry name" value="Transmembrane di-heme cytochromes"/>
    <property type="match status" value="1"/>
</dbReference>
<dbReference type="PROSITE" id="PS51003">
    <property type="entry name" value="CYTB_CTER"/>
    <property type="match status" value="1"/>
</dbReference>
<dbReference type="PROSITE" id="PS51002">
    <property type="entry name" value="CYTB_NTER"/>
    <property type="match status" value="1"/>
</dbReference>
<name>CYB_SCOJU</name>
<reference key="1">
    <citation type="journal article" date="1999" name="J. Mammal. Evol.">
        <title>Phylogenetic relationships and the radiation of Sigmodontine rodents in South America: evidence from cytochrome b.</title>
        <authorList>
            <person name="Smith M.F."/>
            <person name="Patton J.L."/>
        </authorList>
    </citation>
    <scope>NUCLEOTIDE SEQUENCE [GENOMIC DNA]</scope>
</reference>
<geneLocation type="mitochondrion"/>
<sequence>MTILRKSHPLLKIINHSLIDLPTPSNISSWWNFGSLLGICLMIQIITGLFLAMHYTSDTTTAFSSVTHICRDVNYGWLIRYIHANGASMFFICLFIHVGRGIYYGXXMLNETWNIGIILFLTTMATAFVGYVLPWGQMSFWGATVITNLLSAIPYVGTTLVEWIWGGFSVDKATLTRFFTFHFILPFIITALVLVHLLFLHETGSNNPSGLNSNADKIPFHPYYTIKDLLGIFMLLLALMTLVLFFPDILGDPDNYIPANPLNTPAHIKPEWYFLFAYAILRSIPNKLGGVLALLLSILILAAFPLLNTSKQHGLMYRPITQTLYWIFIANLFILTWIGGQPVEHPFIMIGQISSILYFTIIVILMPMASMIENNVLKLHV</sequence>
<gene>
    <name type="primary">MT-CYB</name>
    <name type="synonym">COB</name>
    <name type="synonym">CYTB</name>
    <name type="synonym">MTCYB</name>
</gene>
<evidence type="ECO:0000250" key="1"/>
<evidence type="ECO:0000250" key="2">
    <source>
        <dbReference type="UniProtKB" id="P00157"/>
    </source>
</evidence>
<evidence type="ECO:0000255" key="3">
    <source>
        <dbReference type="PROSITE-ProRule" id="PRU00967"/>
    </source>
</evidence>
<evidence type="ECO:0000255" key="4">
    <source>
        <dbReference type="PROSITE-ProRule" id="PRU00968"/>
    </source>
</evidence>
<comment type="function">
    <text evidence="2">Component of the ubiquinol-cytochrome c reductase complex (complex III or cytochrome b-c1 complex) that is part of the mitochondrial respiratory chain. The b-c1 complex mediates electron transfer from ubiquinol to cytochrome c. Contributes to the generation of a proton gradient across the mitochondrial membrane that is then used for ATP synthesis.</text>
</comment>
<comment type="cofactor">
    <cofactor evidence="2">
        <name>heme b</name>
        <dbReference type="ChEBI" id="CHEBI:60344"/>
    </cofactor>
    <text evidence="2">Binds 2 heme b groups non-covalently.</text>
</comment>
<comment type="subunit">
    <text evidence="2">The cytochrome bc1 complex contains 11 subunits: 3 respiratory subunits (MT-CYB, CYC1 and UQCRFS1), 2 core proteins (UQCRC1 and UQCRC2) and 6 low-molecular weight proteins (UQCRH/QCR6, UQCRB/QCR7, UQCRQ/QCR8, UQCR10/QCR9, UQCR11/QCR10 and a cleavage product of UQCRFS1). This cytochrome bc1 complex then forms a dimer.</text>
</comment>
<comment type="subcellular location">
    <subcellularLocation>
        <location evidence="2">Mitochondrion inner membrane</location>
        <topology evidence="2">Multi-pass membrane protein</topology>
    </subcellularLocation>
</comment>
<comment type="miscellaneous">
    <text evidence="1">Heme 1 (or BL or b562) is low-potential and absorbs at about 562 nm, and heme 2 (or BH or b566) is high-potential and absorbs at about 566 nm.</text>
</comment>
<comment type="similarity">
    <text evidence="3 4">Belongs to the cytochrome b family.</text>
</comment>
<comment type="caution">
    <text evidence="2">The full-length protein contains only eight transmembrane helices, not nine as predicted by bioinformatics tools.</text>
</comment>
<organism>
    <name type="scientific">Scolomys juruaense</name>
    <name type="common">Ucayali spiny mouse</name>
    <dbReference type="NCBI Taxonomy" id="48017"/>
    <lineage>
        <taxon>Eukaryota</taxon>
        <taxon>Metazoa</taxon>
        <taxon>Chordata</taxon>
        <taxon>Craniata</taxon>
        <taxon>Vertebrata</taxon>
        <taxon>Euteleostomi</taxon>
        <taxon>Mammalia</taxon>
        <taxon>Eutheria</taxon>
        <taxon>Euarchontoglires</taxon>
        <taxon>Glires</taxon>
        <taxon>Rodentia</taxon>
        <taxon>Myomorpha</taxon>
        <taxon>Muroidea</taxon>
        <taxon>Cricetidae</taxon>
        <taxon>Sigmodontinae</taxon>
        <taxon>Scolomys</taxon>
    </lineage>
</organism>
<feature type="chain" id="PRO_0000255131" description="Cytochrome b">
    <location>
        <begin position="1"/>
        <end position="381"/>
    </location>
</feature>
<feature type="transmembrane region" description="Helical" evidence="2">
    <location>
        <begin position="33"/>
        <end position="53"/>
    </location>
</feature>
<feature type="transmembrane region" description="Helical" evidence="2">
    <location>
        <begin position="77"/>
        <end position="98"/>
    </location>
</feature>
<feature type="transmembrane region" description="Helical" evidence="2">
    <location>
        <begin position="113"/>
        <end position="133"/>
    </location>
</feature>
<feature type="transmembrane region" description="Helical" evidence="2">
    <location>
        <begin position="178"/>
        <end position="198"/>
    </location>
</feature>
<feature type="transmembrane region" description="Helical" evidence="2">
    <location>
        <begin position="226"/>
        <end position="246"/>
    </location>
</feature>
<feature type="transmembrane region" description="Helical" evidence="2">
    <location>
        <begin position="288"/>
        <end position="308"/>
    </location>
</feature>
<feature type="transmembrane region" description="Helical" evidence="2">
    <location>
        <begin position="320"/>
        <end position="340"/>
    </location>
</feature>
<feature type="transmembrane region" description="Helical" evidence="2">
    <location>
        <begin position="347"/>
        <end position="367"/>
    </location>
</feature>
<feature type="binding site" description="axial binding residue" evidence="2">
    <location>
        <position position="83"/>
    </location>
    <ligand>
        <name>heme b</name>
        <dbReference type="ChEBI" id="CHEBI:60344"/>
        <label>b562</label>
    </ligand>
    <ligandPart>
        <name>Fe</name>
        <dbReference type="ChEBI" id="CHEBI:18248"/>
    </ligandPart>
</feature>
<feature type="binding site" description="axial binding residue" evidence="2">
    <location>
        <position position="97"/>
    </location>
    <ligand>
        <name>heme b</name>
        <dbReference type="ChEBI" id="CHEBI:60344"/>
        <label>b566</label>
    </ligand>
    <ligandPart>
        <name>Fe</name>
        <dbReference type="ChEBI" id="CHEBI:18248"/>
    </ligandPart>
</feature>
<feature type="binding site" description="axial binding residue" evidence="2">
    <location>
        <position position="182"/>
    </location>
    <ligand>
        <name>heme b</name>
        <dbReference type="ChEBI" id="CHEBI:60344"/>
        <label>b562</label>
    </ligand>
    <ligandPart>
        <name>Fe</name>
        <dbReference type="ChEBI" id="CHEBI:18248"/>
    </ligandPart>
</feature>
<feature type="binding site" description="axial binding residue" evidence="2">
    <location>
        <position position="196"/>
    </location>
    <ligand>
        <name>heme b</name>
        <dbReference type="ChEBI" id="CHEBI:60344"/>
        <label>b566</label>
    </ligand>
    <ligandPart>
        <name>Fe</name>
        <dbReference type="ChEBI" id="CHEBI:18248"/>
    </ligandPart>
</feature>
<feature type="binding site" evidence="2">
    <location>
        <position position="201"/>
    </location>
    <ligand>
        <name>a ubiquinone</name>
        <dbReference type="ChEBI" id="CHEBI:16389"/>
    </ligand>
</feature>
<proteinExistence type="inferred from homology"/>
<protein>
    <recommendedName>
        <fullName>Cytochrome b</fullName>
    </recommendedName>
    <alternativeName>
        <fullName>Complex III subunit 3</fullName>
    </alternativeName>
    <alternativeName>
        <fullName>Complex III subunit III</fullName>
    </alternativeName>
    <alternativeName>
        <fullName>Cytochrome b-c1 complex subunit 3</fullName>
    </alternativeName>
    <alternativeName>
        <fullName>Ubiquinol-cytochrome-c reductase complex cytochrome b subunit</fullName>
    </alternativeName>
</protein>
<keyword id="KW-0249">Electron transport</keyword>
<keyword id="KW-0349">Heme</keyword>
<keyword id="KW-0408">Iron</keyword>
<keyword id="KW-0472">Membrane</keyword>
<keyword id="KW-0479">Metal-binding</keyword>
<keyword id="KW-0496">Mitochondrion</keyword>
<keyword id="KW-0999">Mitochondrion inner membrane</keyword>
<keyword id="KW-0679">Respiratory chain</keyword>
<keyword id="KW-0812">Transmembrane</keyword>
<keyword id="KW-1133">Transmembrane helix</keyword>
<keyword id="KW-0813">Transport</keyword>
<keyword id="KW-0830">Ubiquinone</keyword>
<accession>Q9TFX6</accession>